<dbReference type="EMBL" id="CP000356">
    <property type="protein sequence ID" value="ABF52058.1"/>
    <property type="molecule type" value="Genomic_DNA"/>
</dbReference>
<dbReference type="RefSeq" id="WP_011540649.1">
    <property type="nucleotide sequence ID" value="NC_008048.1"/>
</dbReference>
<dbReference type="SMR" id="Q1GWB4"/>
<dbReference type="STRING" id="317655.Sala_0335"/>
<dbReference type="KEGG" id="sal:Sala_0335"/>
<dbReference type="eggNOG" id="COG0632">
    <property type="taxonomic scope" value="Bacteria"/>
</dbReference>
<dbReference type="HOGENOM" id="CLU_087936_3_0_5"/>
<dbReference type="OrthoDB" id="5293449at2"/>
<dbReference type="Proteomes" id="UP000006578">
    <property type="component" value="Chromosome"/>
</dbReference>
<dbReference type="GO" id="GO:0005737">
    <property type="term" value="C:cytoplasm"/>
    <property type="evidence" value="ECO:0007669"/>
    <property type="project" value="UniProtKB-SubCell"/>
</dbReference>
<dbReference type="GO" id="GO:0009379">
    <property type="term" value="C:Holliday junction helicase complex"/>
    <property type="evidence" value="ECO:0007669"/>
    <property type="project" value="InterPro"/>
</dbReference>
<dbReference type="GO" id="GO:0048476">
    <property type="term" value="C:Holliday junction resolvase complex"/>
    <property type="evidence" value="ECO:0007669"/>
    <property type="project" value="UniProtKB-UniRule"/>
</dbReference>
<dbReference type="GO" id="GO:0005524">
    <property type="term" value="F:ATP binding"/>
    <property type="evidence" value="ECO:0007669"/>
    <property type="project" value="InterPro"/>
</dbReference>
<dbReference type="GO" id="GO:0000400">
    <property type="term" value="F:four-way junction DNA binding"/>
    <property type="evidence" value="ECO:0007669"/>
    <property type="project" value="UniProtKB-UniRule"/>
</dbReference>
<dbReference type="GO" id="GO:0009378">
    <property type="term" value="F:four-way junction helicase activity"/>
    <property type="evidence" value="ECO:0007669"/>
    <property type="project" value="InterPro"/>
</dbReference>
<dbReference type="GO" id="GO:0006310">
    <property type="term" value="P:DNA recombination"/>
    <property type="evidence" value="ECO:0007669"/>
    <property type="project" value="UniProtKB-UniRule"/>
</dbReference>
<dbReference type="GO" id="GO:0006281">
    <property type="term" value="P:DNA repair"/>
    <property type="evidence" value="ECO:0007669"/>
    <property type="project" value="UniProtKB-UniRule"/>
</dbReference>
<dbReference type="Gene3D" id="1.10.150.20">
    <property type="entry name" value="5' to 3' exonuclease, C-terminal subdomain"/>
    <property type="match status" value="1"/>
</dbReference>
<dbReference type="Gene3D" id="1.10.8.10">
    <property type="entry name" value="DNA helicase RuvA subunit, C-terminal domain"/>
    <property type="match status" value="1"/>
</dbReference>
<dbReference type="Gene3D" id="2.40.50.140">
    <property type="entry name" value="Nucleic acid-binding proteins"/>
    <property type="match status" value="1"/>
</dbReference>
<dbReference type="HAMAP" id="MF_00031">
    <property type="entry name" value="DNA_HJ_migration_RuvA"/>
    <property type="match status" value="1"/>
</dbReference>
<dbReference type="InterPro" id="IPR013849">
    <property type="entry name" value="DNA_helicase_Holl-junc_RuvA_I"/>
</dbReference>
<dbReference type="InterPro" id="IPR003583">
    <property type="entry name" value="Hlx-hairpin-Hlx_DNA-bd_motif"/>
</dbReference>
<dbReference type="InterPro" id="IPR012340">
    <property type="entry name" value="NA-bd_OB-fold"/>
</dbReference>
<dbReference type="InterPro" id="IPR000085">
    <property type="entry name" value="RuvA"/>
</dbReference>
<dbReference type="InterPro" id="IPR010994">
    <property type="entry name" value="RuvA_2-like"/>
</dbReference>
<dbReference type="InterPro" id="IPR011114">
    <property type="entry name" value="RuvA_C"/>
</dbReference>
<dbReference type="InterPro" id="IPR036267">
    <property type="entry name" value="RuvA_C_sf"/>
</dbReference>
<dbReference type="NCBIfam" id="TIGR00084">
    <property type="entry name" value="ruvA"/>
    <property type="match status" value="1"/>
</dbReference>
<dbReference type="Pfam" id="PF14520">
    <property type="entry name" value="HHH_5"/>
    <property type="match status" value="1"/>
</dbReference>
<dbReference type="Pfam" id="PF07499">
    <property type="entry name" value="RuvA_C"/>
    <property type="match status" value="1"/>
</dbReference>
<dbReference type="Pfam" id="PF01330">
    <property type="entry name" value="RuvA_N"/>
    <property type="match status" value="1"/>
</dbReference>
<dbReference type="SMART" id="SM00278">
    <property type="entry name" value="HhH1"/>
    <property type="match status" value="2"/>
</dbReference>
<dbReference type="SUPFAM" id="SSF46929">
    <property type="entry name" value="DNA helicase RuvA subunit, C-terminal domain"/>
    <property type="match status" value="1"/>
</dbReference>
<dbReference type="SUPFAM" id="SSF50249">
    <property type="entry name" value="Nucleic acid-binding proteins"/>
    <property type="match status" value="1"/>
</dbReference>
<dbReference type="SUPFAM" id="SSF47781">
    <property type="entry name" value="RuvA domain 2-like"/>
    <property type="match status" value="1"/>
</dbReference>
<proteinExistence type="inferred from homology"/>
<name>RUVA_SPHAL</name>
<gene>
    <name evidence="1" type="primary">ruvA</name>
    <name type="ordered locus">Sala_0335</name>
</gene>
<organism>
    <name type="scientific">Sphingopyxis alaskensis (strain DSM 13593 / LMG 18877 / RB2256)</name>
    <name type="common">Sphingomonas alaskensis</name>
    <dbReference type="NCBI Taxonomy" id="317655"/>
    <lineage>
        <taxon>Bacteria</taxon>
        <taxon>Pseudomonadati</taxon>
        <taxon>Pseudomonadota</taxon>
        <taxon>Alphaproteobacteria</taxon>
        <taxon>Sphingomonadales</taxon>
        <taxon>Sphingomonadaceae</taxon>
        <taxon>Sphingopyxis</taxon>
    </lineage>
</organism>
<reference key="1">
    <citation type="journal article" date="2009" name="Proc. Natl. Acad. Sci. U.S.A.">
        <title>The genomic basis of trophic strategy in marine bacteria.</title>
        <authorList>
            <person name="Lauro F.M."/>
            <person name="McDougald D."/>
            <person name="Thomas T."/>
            <person name="Williams T.J."/>
            <person name="Egan S."/>
            <person name="Rice S."/>
            <person name="DeMaere M.Z."/>
            <person name="Ting L."/>
            <person name="Ertan H."/>
            <person name="Johnson J."/>
            <person name="Ferriera S."/>
            <person name="Lapidus A."/>
            <person name="Anderson I."/>
            <person name="Kyrpides N."/>
            <person name="Munk A.C."/>
            <person name="Detter C."/>
            <person name="Han C.S."/>
            <person name="Brown M.V."/>
            <person name="Robb F.T."/>
            <person name="Kjelleberg S."/>
            <person name="Cavicchioli R."/>
        </authorList>
    </citation>
    <scope>NUCLEOTIDE SEQUENCE [LARGE SCALE GENOMIC DNA]</scope>
    <source>
        <strain>DSM 13593 / LMG 18877 / RB2256</strain>
    </source>
</reference>
<sequence>MIAKLTGRLDSNGAGHAVIDVGGVGYLVEASARTLDALGAVGGEVTIHTEMLVGEDFLRLLGFARAEERDWFRLLTSVQGVGAKVALAILSALEVADLQRALASGDSAMIARANGVGPKLAQRITHELKDKAGALGGISGSGPALSAAAGPVGDAIAALTGLGFKPGEASAAVAAANEELGADASLDALVRVALKKAAK</sequence>
<keyword id="KW-0963">Cytoplasm</keyword>
<keyword id="KW-0227">DNA damage</keyword>
<keyword id="KW-0233">DNA recombination</keyword>
<keyword id="KW-0234">DNA repair</keyword>
<keyword id="KW-0238">DNA-binding</keyword>
<keyword id="KW-1185">Reference proteome</keyword>
<evidence type="ECO:0000255" key="1">
    <source>
        <dbReference type="HAMAP-Rule" id="MF_00031"/>
    </source>
</evidence>
<protein>
    <recommendedName>
        <fullName evidence="1">Holliday junction branch migration complex subunit RuvA</fullName>
    </recommendedName>
</protein>
<accession>Q1GWB4</accession>
<comment type="function">
    <text evidence="1">The RuvA-RuvB-RuvC complex processes Holliday junction (HJ) DNA during genetic recombination and DNA repair, while the RuvA-RuvB complex plays an important role in the rescue of blocked DNA replication forks via replication fork reversal (RFR). RuvA specifically binds to HJ cruciform DNA, conferring on it an open structure. The RuvB hexamer acts as an ATP-dependent pump, pulling dsDNA into and through the RuvAB complex. HJ branch migration allows RuvC to scan DNA until it finds its consensus sequence, where it cleaves and resolves the cruciform DNA.</text>
</comment>
<comment type="subunit">
    <text evidence="1">Homotetramer. Forms an RuvA(8)-RuvB(12)-Holliday junction (HJ) complex. HJ DNA is sandwiched between 2 RuvA tetramers; dsDNA enters through RuvA and exits via RuvB. An RuvB hexamer assembles on each DNA strand where it exits the tetramer. Each RuvB hexamer is contacted by two RuvA subunits (via domain III) on 2 adjacent RuvB subunits; this complex drives branch migration. In the full resolvosome a probable DNA-RuvA(4)-RuvB(12)-RuvC(2) complex forms which resolves the HJ.</text>
</comment>
<comment type="subcellular location">
    <subcellularLocation>
        <location evidence="1">Cytoplasm</location>
    </subcellularLocation>
</comment>
<comment type="domain">
    <text evidence="1">Has three domains with a flexible linker between the domains II and III and assumes an 'L' shape. Domain III is highly mobile and contacts RuvB.</text>
</comment>
<comment type="similarity">
    <text evidence="1">Belongs to the RuvA family.</text>
</comment>
<feature type="chain" id="PRO_1000002560" description="Holliday junction branch migration complex subunit RuvA">
    <location>
        <begin position="1"/>
        <end position="199"/>
    </location>
</feature>
<feature type="region of interest" description="Domain I" evidence="1">
    <location>
        <begin position="1"/>
        <end position="64"/>
    </location>
</feature>
<feature type="region of interest" description="Domain II" evidence="1">
    <location>
        <begin position="65"/>
        <end position="143"/>
    </location>
</feature>
<feature type="region of interest" description="Flexible linker" evidence="1">
    <location>
        <begin position="144"/>
        <end position="146"/>
    </location>
</feature>
<feature type="region of interest" description="Domain III" evidence="1">
    <location>
        <begin position="147"/>
        <end position="199"/>
    </location>
</feature>